<feature type="chain" id="PRO_0000319631" description="UPF0519 protein B">
    <location>
        <begin position="1"/>
        <end position="70"/>
    </location>
</feature>
<reference key="1">
    <citation type="journal article" date="2002" name="Nature">
        <title>Sequence and analysis of chromosome 2 of Dictyostelium discoideum.</title>
        <authorList>
            <person name="Gloeckner G."/>
            <person name="Eichinger L."/>
            <person name="Szafranski K."/>
            <person name="Pachebat J.A."/>
            <person name="Bankier A.T."/>
            <person name="Dear P.H."/>
            <person name="Lehmann R."/>
            <person name="Baumgart C."/>
            <person name="Parra G."/>
            <person name="Abril J.F."/>
            <person name="Guigo R."/>
            <person name="Kumpf K."/>
            <person name="Tunggal B."/>
            <person name="Cox E.C."/>
            <person name="Quail M.A."/>
            <person name="Platzer M."/>
            <person name="Rosenthal A."/>
            <person name="Noegel A.A."/>
        </authorList>
    </citation>
    <scope>NUCLEOTIDE SEQUENCE [LARGE SCALE GENOMIC DNA]</scope>
    <source>
        <strain>AX4</strain>
    </source>
</reference>
<reference key="2">
    <citation type="journal article" date="2005" name="Nature">
        <title>The genome of the social amoeba Dictyostelium discoideum.</title>
        <authorList>
            <person name="Eichinger L."/>
            <person name="Pachebat J.A."/>
            <person name="Gloeckner G."/>
            <person name="Rajandream M.A."/>
            <person name="Sucgang R."/>
            <person name="Berriman M."/>
            <person name="Song J."/>
            <person name="Olsen R."/>
            <person name="Szafranski K."/>
            <person name="Xu Q."/>
            <person name="Tunggal B."/>
            <person name="Kummerfeld S."/>
            <person name="Madera M."/>
            <person name="Konfortov B.A."/>
            <person name="Rivero F."/>
            <person name="Bankier A.T."/>
            <person name="Lehmann R."/>
            <person name="Hamlin N."/>
            <person name="Davies R."/>
            <person name="Gaudet P."/>
            <person name="Fey P."/>
            <person name="Pilcher K."/>
            <person name="Chen G."/>
            <person name="Saunders D."/>
            <person name="Sodergren E.J."/>
            <person name="Davis P."/>
            <person name="Kerhornou A."/>
            <person name="Nie X."/>
            <person name="Hall N."/>
            <person name="Anjard C."/>
            <person name="Hemphill L."/>
            <person name="Bason N."/>
            <person name="Farbrother P."/>
            <person name="Desany B."/>
            <person name="Just E."/>
            <person name="Morio T."/>
            <person name="Rost R."/>
            <person name="Churcher C.M."/>
            <person name="Cooper J."/>
            <person name="Haydock S."/>
            <person name="van Driessche N."/>
            <person name="Cronin A."/>
            <person name="Goodhead I."/>
            <person name="Muzny D.M."/>
            <person name="Mourier T."/>
            <person name="Pain A."/>
            <person name="Lu M."/>
            <person name="Harper D."/>
            <person name="Lindsay R."/>
            <person name="Hauser H."/>
            <person name="James K.D."/>
            <person name="Quiles M."/>
            <person name="Madan Babu M."/>
            <person name="Saito T."/>
            <person name="Buchrieser C."/>
            <person name="Wardroper A."/>
            <person name="Felder M."/>
            <person name="Thangavelu M."/>
            <person name="Johnson D."/>
            <person name="Knights A."/>
            <person name="Loulseged H."/>
            <person name="Mungall K.L."/>
            <person name="Oliver K."/>
            <person name="Price C."/>
            <person name="Quail M.A."/>
            <person name="Urushihara H."/>
            <person name="Hernandez J."/>
            <person name="Rabbinowitsch E."/>
            <person name="Steffen D."/>
            <person name="Sanders M."/>
            <person name="Ma J."/>
            <person name="Kohara Y."/>
            <person name="Sharp S."/>
            <person name="Simmonds M.N."/>
            <person name="Spiegler S."/>
            <person name="Tivey A."/>
            <person name="Sugano S."/>
            <person name="White B."/>
            <person name="Walker D."/>
            <person name="Woodward J.R."/>
            <person name="Winckler T."/>
            <person name="Tanaka Y."/>
            <person name="Shaulsky G."/>
            <person name="Schleicher M."/>
            <person name="Weinstock G.M."/>
            <person name="Rosenthal A."/>
            <person name="Cox E.C."/>
            <person name="Chisholm R.L."/>
            <person name="Gibbs R.A."/>
            <person name="Loomis W.F."/>
            <person name="Platzer M."/>
            <person name="Kay R.R."/>
            <person name="Williams J.G."/>
            <person name="Dear P.H."/>
            <person name="Noegel A.A."/>
            <person name="Barrell B.G."/>
            <person name="Kuspa A."/>
        </authorList>
    </citation>
    <scope>NUCLEOTIDE SEQUENCE [LARGE SCALE GENOMIC DNA]</scope>
    <source>
        <strain>AX4</strain>
    </source>
</reference>
<comment type="similarity">
    <text evidence="1">Belongs to the UPF0519 family.</text>
</comment>
<protein>
    <recommendedName>
        <fullName>UPF0519 protein B</fullName>
    </recommendedName>
</protein>
<dbReference type="EMBL" id="AAFI02000007">
    <property type="protein sequence ID" value="EAL71484.1"/>
    <property type="molecule type" value="Genomic_DNA"/>
</dbReference>
<dbReference type="RefSeq" id="XP_645410.1">
    <property type="nucleotide sequence ID" value="XM_640318.1"/>
</dbReference>
<dbReference type="PaxDb" id="44689-DDB0266535"/>
<dbReference type="EnsemblProtists" id="EAL71484">
    <property type="protein sequence ID" value="EAL71484"/>
    <property type="gene ID" value="DDB_G0271920"/>
</dbReference>
<dbReference type="GeneID" id="8618210"/>
<dbReference type="KEGG" id="ddi:DDB_G0271920"/>
<dbReference type="dictyBase" id="DDB_G0271920"/>
<dbReference type="HOGENOM" id="CLU_2799314_0_0_1"/>
<dbReference type="InParanoid" id="Q86I91"/>
<dbReference type="PRO" id="PR:Q86I91"/>
<dbReference type="Proteomes" id="UP000002195">
    <property type="component" value="Chromosome 2"/>
</dbReference>
<dbReference type="InterPro" id="IPR008455">
    <property type="entry name" value="HssA/B-related"/>
</dbReference>
<dbReference type="Pfam" id="PF05710">
    <property type="entry name" value="Coiled"/>
    <property type="match status" value="1"/>
</dbReference>
<name>U519B_DICDI</name>
<proteinExistence type="inferred from homology"/>
<evidence type="ECO:0000305" key="1"/>
<accession>Q86I91</accession>
<accession>Q55AE4</accession>
<keyword id="KW-1185">Reference proteome</keyword>
<organism>
    <name type="scientific">Dictyostelium discoideum</name>
    <name type="common">Social amoeba</name>
    <dbReference type="NCBI Taxonomy" id="44689"/>
    <lineage>
        <taxon>Eukaryota</taxon>
        <taxon>Amoebozoa</taxon>
        <taxon>Evosea</taxon>
        <taxon>Eumycetozoa</taxon>
        <taxon>Dictyostelia</taxon>
        <taxon>Dictyosteliales</taxon>
        <taxon>Dictyosteliaceae</taxon>
        <taxon>Dictyostelium</taxon>
    </lineage>
</organism>
<sequence length="70" mass="7170">MTIINSISSLGKITNKNKSQNNLNSINNSINPPNNIQGSNEKTGLVSGLLELVGGVVLILGLVVGATLGL</sequence>
<gene>
    <name type="primary">sigN122</name>
    <name type="ORF">DDB_G0271920</name>
</gene>